<gene>
    <name evidence="1" type="primary">tig</name>
    <name type="ordered locus">BL0947</name>
</gene>
<reference key="1">
    <citation type="journal article" date="2002" name="Proc. Natl. Acad. Sci. U.S.A.">
        <title>The genome sequence of Bifidobacterium longum reflects its adaptation to the human gastrointestinal tract.</title>
        <authorList>
            <person name="Schell M.A."/>
            <person name="Karmirantzou M."/>
            <person name="Snel B."/>
            <person name="Vilanova D."/>
            <person name="Berger B."/>
            <person name="Pessi G."/>
            <person name="Zwahlen M.-C."/>
            <person name="Desiere F."/>
            <person name="Bork P."/>
            <person name="Delley M."/>
            <person name="Pridmore R.D."/>
            <person name="Arigoni F."/>
        </authorList>
    </citation>
    <scope>NUCLEOTIDE SEQUENCE [LARGE SCALE GENOMIC DNA]</scope>
    <source>
        <strain>NCC 2705</strain>
    </source>
</reference>
<comment type="function">
    <text evidence="1">Involved in protein export. Acts as a chaperone by maintaining the newly synthesized protein in an open conformation. Functions as a peptidyl-prolyl cis-trans isomerase.</text>
</comment>
<comment type="catalytic activity">
    <reaction evidence="1">
        <text>[protein]-peptidylproline (omega=180) = [protein]-peptidylproline (omega=0)</text>
        <dbReference type="Rhea" id="RHEA:16237"/>
        <dbReference type="Rhea" id="RHEA-COMP:10747"/>
        <dbReference type="Rhea" id="RHEA-COMP:10748"/>
        <dbReference type="ChEBI" id="CHEBI:83833"/>
        <dbReference type="ChEBI" id="CHEBI:83834"/>
        <dbReference type="EC" id="5.2.1.8"/>
    </reaction>
</comment>
<comment type="subcellular location">
    <subcellularLocation>
        <location>Cytoplasm</location>
    </subcellularLocation>
    <text evidence="1">About half TF is bound to the ribosome near the polypeptide exit tunnel while the other half is free in the cytoplasm.</text>
</comment>
<comment type="domain">
    <text evidence="1">Consists of 3 domains; the N-terminus binds the ribosome, the middle domain has PPIase activity, while the C-terminus has intrinsic chaperone activity on its own.</text>
</comment>
<comment type="similarity">
    <text evidence="1">Belongs to the FKBP-type PPIase family. Tig subfamily.</text>
</comment>
<evidence type="ECO:0000255" key="1">
    <source>
        <dbReference type="HAMAP-Rule" id="MF_00303"/>
    </source>
</evidence>
<dbReference type="EC" id="5.2.1.8" evidence="1"/>
<dbReference type="EMBL" id="AE014295">
    <property type="protein sequence ID" value="AAN24759.1"/>
    <property type="molecule type" value="Genomic_DNA"/>
</dbReference>
<dbReference type="RefSeq" id="NP_696123.1">
    <property type="nucleotide sequence ID" value="NC_004307.2"/>
</dbReference>
<dbReference type="RefSeq" id="WP_011068214.1">
    <property type="nucleotide sequence ID" value="NC_004307.2"/>
</dbReference>
<dbReference type="SMR" id="Q8G5Q7"/>
<dbReference type="STRING" id="206672.BL0947"/>
<dbReference type="EnsemblBacteria" id="AAN24759">
    <property type="protein sequence ID" value="AAN24759"/>
    <property type="gene ID" value="BL0947"/>
</dbReference>
<dbReference type="KEGG" id="blo:BL0947"/>
<dbReference type="PATRIC" id="fig|206672.9.peg.650"/>
<dbReference type="HOGENOM" id="CLU_033058_3_0_11"/>
<dbReference type="OrthoDB" id="9767721at2"/>
<dbReference type="PhylomeDB" id="Q8G5Q7"/>
<dbReference type="Proteomes" id="UP000000439">
    <property type="component" value="Chromosome"/>
</dbReference>
<dbReference type="GO" id="GO:0005737">
    <property type="term" value="C:cytoplasm"/>
    <property type="evidence" value="ECO:0007669"/>
    <property type="project" value="UniProtKB-SubCell"/>
</dbReference>
<dbReference type="GO" id="GO:0003755">
    <property type="term" value="F:peptidyl-prolyl cis-trans isomerase activity"/>
    <property type="evidence" value="ECO:0007669"/>
    <property type="project" value="UniProtKB-UniRule"/>
</dbReference>
<dbReference type="GO" id="GO:0044183">
    <property type="term" value="F:protein folding chaperone"/>
    <property type="evidence" value="ECO:0007669"/>
    <property type="project" value="TreeGrafter"/>
</dbReference>
<dbReference type="GO" id="GO:0043022">
    <property type="term" value="F:ribosome binding"/>
    <property type="evidence" value="ECO:0007669"/>
    <property type="project" value="TreeGrafter"/>
</dbReference>
<dbReference type="GO" id="GO:0051083">
    <property type="term" value="P:'de novo' cotranslational protein folding"/>
    <property type="evidence" value="ECO:0007669"/>
    <property type="project" value="TreeGrafter"/>
</dbReference>
<dbReference type="GO" id="GO:0051301">
    <property type="term" value="P:cell division"/>
    <property type="evidence" value="ECO:0007669"/>
    <property type="project" value="UniProtKB-KW"/>
</dbReference>
<dbReference type="GO" id="GO:0061077">
    <property type="term" value="P:chaperone-mediated protein folding"/>
    <property type="evidence" value="ECO:0007669"/>
    <property type="project" value="TreeGrafter"/>
</dbReference>
<dbReference type="GO" id="GO:0015031">
    <property type="term" value="P:protein transport"/>
    <property type="evidence" value="ECO:0007669"/>
    <property type="project" value="UniProtKB-UniRule"/>
</dbReference>
<dbReference type="GO" id="GO:0043335">
    <property type="term" value="P:protein unfolding"/>
    <property type="evidence" value="ECO:0007669"/>
    <property type="project" value="TreeGrafter"/>
</dbReference>
<dbReference type="Gene3D" id="3.10.50.40">
    <property type="match status" value="1"/>
</dbReference>
<dbReference type="Gene3D" id="3.30.70.1050">
    <property type="entry name" value="Trigger factor ribosome-binding domain"/>
    <property type="match status" value="1"/>
</dbReference>
<dbReference type="Gene3D" id="1.10.3120.10">
    <property type="entry name" value="Trigger factor, C-terminal domain"/>
    <property type="match status" value="1"/>
</dbReference>
<dbReference type="HAMAP" id="MF_00303">
    <property type="entry name" value="Trigger_factor_Tig"/>
    <property type="match status" value="1"/>
</dbReference>
<dbReference type="InterPro" id="IPR046357">
    <property type="entry name" value="PPIase_dom_sf"/>
</dbReference>
<dbReference type="InterPro" id="IPR001179">
    <property type="entry name" value="PPIase_FKBP_dom"/>
</dbReference>
<dbReference type="InterPro" id="IPR005215">
    <property type="entry name" value="Trig_fac"/>
</dbReference>
<dbReference type="InterPro" id="IPR008880">
    <property type="entry name" value="Trigger_fac_C"/>
</dbReference>
<dbReference type="InterPro" id="IPR037041">
    <property type="entry name" value="Trigger_fac_C_sf"/>
</dbReference>
<dbReference type="InterPro" id="IPR008881">
    <property type="entry name" value="Trigger_fac_ribosome-bd_bac"/>
</dbReference>
<dbReference type="InterPro" id="IPR036611">
    <property type="entry name" value="Trigger_fac_ribosome-bd_sf"/>
</dbReference>
<dbReference type="InterPro" id="IPR027304">
    <property type="entry name" value="Trigger_fact/SurA_dom_sf"/>
</dbReference>
<dbReference type="NCBIfam" id="TIGR00115">
    <property type="entry name" value="tig"/>
    <property type="match status" value="1"/>
</dbReference>
<dbReference type="PANTHER" id="PTHR30560">
    <property type="entry name" value="TRIGGER FACTOR CHAPERONE AND PEPTIDYL-PROLYL CIS/TRANS ISOMERASE"/>
    <property type="match status" value="1"/>
</dbReference>
<dbReference type="PANTHER" id="PTHR30560:SF3">
    <property type="entry name" value="TRIGGER FACTOR-LIKE PROTEIN TIG, CHLOROPLASTIC"/>
    <property type="match status" value="1"/>
</dbReference>
<dbReference type="Pfam" id="PF00254">
    <property type="entry name" value="FKBP_C"/>
    <property type="match status" value="1"/>
</dbReference>
<dbReference type="Pfam" id="PF05698">
    <property type="entry name" value="Trigger_C"/>
    <property type="match status" value="1"/>
</dbReference>
<dbReference type="Pfam" id="PF05697">
    <property type="entry name" value="Trigger_N"/>
    <property type="match status" value="1"/>
</dbReference>
<dbReference type="PIRSF" id="PIRSF003095">
    <property type="entry name" value="Trigger_factor"/>
    <property type="match status" value="1"/>
</dbReference>
<dbReference type="SUPFAM" id="SSF54534">
    <property type="entry name" value="FKBP-like"/>
    <property type="match status" value="1"/>
</dbReference>
<dbReference type="SUPFAM" id="SSF109998">
    <property type="entry name" value="Triger factor/SurA peptide-binding domain-like"/>
    <property type="match status" value="1"/>
</dbReference>
<dbReference type="SUPFAM" id="SSF102735">
    <property type="entry name" value="Trigger factor ribosome-binding domain"/>
    <property type="match status" value="1"/>
</dbReference>
<dbReference type="PROSITE" id="PS50059">
    <property type="entry name" value="FKBP_PPIASE"/>
    <property type="match status" value="1"/>
</dbReference>
<protein>
    <recommendedName>
        <fullName evidence="1">Trigger factor</fullName>
        <shortName evidence="1">TF</shortName>
        <ecNumber evidence="1">5.2.1.8</ecNumber>
    </recommendedName>
    <alternativeName>
        <fullName evidence="1">PPIase</fullName>
    </alternativeName>
</protein>
<sequence length="459" mass="49641">MKISVRNLEPTKVKLTVTVEPEELNPYLDAARKEIAKQVNVPGFRKGHVPGKIIDQRIGFAAVAGEAVNDAVPELYSKALEEKKIRPMAQPEFDVQDVPQSANDETKLKFTATVERRPDIELPEIDGLEIAISKPEVKDEDVDKRLEALRQRFGTLVGVDRPAAKGDFANIDLTAEIDGETVDSQEGVSYELGSNTMLDGLDEALDGLSAGEETTFEGTLEAGEHEGQKATVKVKVNSVKAEELPELNDEFASEASEFDTLDELKADIRKAAAQDAEGRQATEARDAFIAKLQEGLEIPVPKGVKANMVEEQLKGMTPDPEKATKEQKAQAEETVEKDLRDQMVLDALAEKLDVQVSQSDVFNFLASIAQQYGMDPNNFIQAIIKNGQLGSAVQEVGRSKGLLAGMRAVKFTADGEVVDLSAFLGEAAEDEESESVEAASAAAAVADELSAKDDAKDAE</sequence>
<name>TIG_BIFLO</name>
<keyword id="KW-0131">Cell cycle</keyword>
<keyword id="KW-0132">Cell division</keyword>
<keyword id="KW-0143">Chaperone</keyword>
<keyword id="KW-0963">Cytoplasm</keyword>
<keyword id="KW-0413">Isomerase</keyword>
<keyword id="KW-1185">Reference proteome</keyword>
<keyword id="KW-0697">Rotamase</keyword>
<accession>Q8G5Q7</accession>
<proteinExistence type="inferred from homology"/>
<feature type="chain" id="PRO_0000179317" description="Trigger factor">
    <location>
        <begin position="1"/>
        <end position="459"/>
    </location>
</feature>
<feature type="domain" description="PPIase FKBP-type" evidence="1">
    <location>
        <begin position="166"/>
        <end position="245"/>
    </location>
</feature>
<organism>
    <name type="scientific">Bifidobacterium longum (strain NCC 2705)</name>
    <dbReference type="NCBI Taxonomy" id="206672"/>
    <lineage>
        <taxon>Bacteria</taxon>
        <taxon>Bacillati</taxon>
        <taxon>Actinomycetota</taxon>
        <taxon>Actinomycetes</taxon>
        <taxon>Bifidobacteriales</taxon>
        <taxon>Bifidobacteriaceae</taxon>
        <taxon>Bifidobacterium</taxon>
    </lineage>
</organism>